<comment type="function">
    <text evidence="1">Receptor that may play a role in the perception of bitterness and is gustducin-linked. May play a role in sensing the chemical composition of the gastrointestinal content. The activity of this receptor may stimulate alpha gustducin, mediate PLC-beta-2 activation and lead to the gating of TRPM5 (By similarity).</text>
</comment>
<comment type="subcellular location">
    <subcellularLocation>
        <location>Membrane</location>
        <topology>Multi-pass membrane protein</topology>
    </subcellularLocation>
</comment>
<comment type="miscellaneous">
    <text>Most taste cells may be activated by a limited number of bitter compounds; individual taste cells can discriminate among bitter stimuli.</text>
</comment>
<comment type="similarity">
    <text evidence="3">Belongs to the G-protein coupled receptor T2R family.</text>
</comment>
<name>T2R13_PAPHA</name>
<accession>Q646F7</accession>
<evidence type="ECO:0000250" key="1"/>
<evidence type="ECO:0000255" key="2"/>
<evidence type="ECO:0000305" key="3"/>
<protein>
    <recommendedName>
        <fullName>Taste receptor type 2 member 13</fullName>
        <shortName>T2R13</shortName>
    </recommendedName>
</protein>
<dbReference type="EMBL" id="AY724825">
    <property type="protein sequence ID" value="AAU21062.1"/>
    <property type="molecule type" value="Genomic_DNA"/>
</dbReference>
<dbReference type="GlyCosmos" id="Q646F7">
    <property type="glycosylation" value="1 site, No reported glycans"/>
</dbReference>
<dbReference type="GO" id="GO:0005886">
    <property type="term" value="C:plasma membrane"/>
    <property type="evidence" value="ECO:0007669"/>
    <property type="project" value="UniProtKB-ARBA"/>
</dbReference>
<dbReference type="GO" id="GO:0033038">
    <property type="term" value="F:bitter taste receptor activity"/>
    <property type="evidence" value="ECO:0007669"/>
    <property type="project" value="InterPro"/>
</dbReference>
<dbReference type="GO" id="GO:0004930">
    <property type="term" value="F:G protein-coupled receptor activity"/>
    <property type="evidence" value="ECO:0007669"/>
    <property type="project" value="UniProtKB-KW"/>
</dbReference>
<dbReference type="FunFam" id="1.20.1070.10:FF:000042">
    <property type="entry name" value="Taste receptor type 2 member 7"/>
    <property type="match status" value="1"/>
</dbReference>
<dbReference type="Gene3D" id="1.20.1070.10">
    <property type="entry name" value="Rhodopsin 7-helix transmembrane proteins"/>
    <property type="match status" value="1"/>
</dbReference>
<dbReference type="InterPro" id="IPR007960">
    <property type="entry name" value="TAS2R"/>
</dbReference>
<dbReference type="PANTHER" id="PTHR11394">
    <property type="entry name" value="TASTE RECEPTOR TYPE 2"/>
    <property type="match status" value="1"/>
</dbReference>
<dbReference type="PANTHER" id="PTHR11394:SF28">
    <property type="entry name" value="TASTE RECEPTOR TYPE 2 MEMBER 13"/>
    <property type="match status" value="1"/>
</dbReference>
<dbReference type="Pfam" id="PF05296">
    <property type="entry name" value="TAS2R"/>
    <property type="match status" value="1"/>
</dbReference>
<dbReference type="SUPFAM" id="SSF81321">
    <property type="entry name" value="Family A G protein-coupled receptor-like"/>
    <property type="match status" value="1"/>
</dbReference>
<proteinExistence type="inferred from homology"/>
<sequence length="303" mass="34841">MESALLSILTLVIIAEFVIGNLSNGFXVLINCIDWVSKRQLSSVDKILTFLAISRIGLIWELLVSWFLGLHYLAIFVSGTGLRIMIFSWVVSNHFSLWLATILSIFYLLKIASFSSPAFLYLKWRVNQVILMILLGTLVFLFLNLIQINIHIKDWLDRCERNTIWNFSMSGLPTFSVPVKFTMTMFSLAPFTVALISFLLLIFSLRKHLQKMQLNYKGHREPRTKAHINALKIVISFLLLYASFFLCILISWISELYQNTLIHMFCQTIGVFYPSSHSFLLILGNPKLRQASLLVAAKVWAKR</sequence>
<reference key="1">
    <citation type="journal article" date="2005" name="Mol. Biol. Evol.">
        <title>Evolution of bitter taste receptors in humans and apes.</title>
        <authorList>
            <person name="Fischer A."/>
            <person name="Gilad Y."/>
            <person name="Man O."/>
            <person name="Paeaebo S."/>
        </authorList>
    </citation>
    <scope>NUCLEOTIDE SEQUENCE [GENOMIC DNA]</scope>
</reference>
<gene>
    <name type="primary">TAS2R13</name>
</gene>
<organism>
    <name type="scientific">Papio hamadryas</name>
    <name type="common">Hamadryas baboon</name>
    <dbReference type="NCBI Taxonomy" id="9557"/>
    <lineage>
        <taxon>Eukaryota</taxon>
        <taxon>Metazoa</taxon>
        <taxon>Chordata</taxon>
        <taxon>Craniata</taxon>
        <taxon>Vertebrata</taxon>
        <taxon>Euteleostomi</taxon>
        <taxon>Mammalia</taxon>
        <taxon>Eutheria</taxon>
        <taxon>Euarchontoglires</taxon>
        <taxon>Primates</taxon>
        <taxon>Haplorrhini</taxon>
        <taxon>Catarrhini</taxon>
        <taxon>Cercopithecidae</taxon>
        <taxon>Cercopithecinae</taxon>
        <taxon>Papio</taxon>
    </lineage>
</organism>
<keyword id="KW-0297">G-protein coupled receptor</keyword>
<keyword id="KW-0325">Glycoprotein</keyword>
<keyword id="KW-0472">Membrane</keyword>
<keyword id="KW-0675">Receptor</keyword>
<keyword id="KW-0716">Sensory transduction</keyword>
<keyword id="KW-0919">Taste</keyword>
<keyword id="KW-0807">Transducer</keyword>
<keyword id="KW-0812">Transmembrane</keyword>
<keyword id="KW-1133">Transmembrane helix</keyword>
<feature type="chain" id="PRO_0000082250" description="Taste receptor type 2 member 13">
    <location>
        <begin position="1"/>
        <end position="303"/>
    </location>
</feature>
<feature type="topological domain" description="Extracellular" evidence="2">
    <location>
        <begin position="1"/>
        <end position="7"/>
    </location>
</feature>
<feature type="transmembrane region" description="Helical; Name=1" evidence="2">
    <location>
        <begin position="8"/>
        <end position="28"/>
    </location>
</feature>
<feature type="topological domain" description="Cytoplasmic" evidence="2">
    <location>
        <begin position="29"/>
        <end position="55"/>
    </location>
</feature>
<feature type="transmembrane region" description="Helical; Name=2" evidence="2">
    <location>
        <begin position="56"/>
        <end position="76"/>
    </location>
</feature>
<feature type="topological domain" description="Extracellular" evidence="2">
    <location>
        <begin position="77"/>
        <end position="85"/>
    </location>
</feature>
<feature type="transmembrane region" description="Helical; Name=3" evidence="2">
    <location>
        <begin position="86"/>
        <end position="106"/>
    </location>
</feature>
<feature type="topological domain" description="Cytoplasmic" evidence="2">
    <location>
        <begin position="107"/>
        <end position="128"/>
    </location>
</feature>
<feature type="transmembrane region" description="Helical; Name=4" evidence="2">
    <location>
        <begin position="129"/>
        <end position="149"/>
    </location>
</feature>
<feature type="topological domain" description="Extracellular" evidence="2">
    <location>
        <begin position="150"/>
        <end position="184"/>
    </location>
</feature>
<feature type="transmembrane region" description="Helical; Name=5" evidence="2">
    <location>
        <begin position="185"/>
        <end position="205"/>
    </location>
</feature>
<feature type="topological domain" description="Cytoplasmic" evidence="2">
    <location>
        <begin position="206"/>
        <end position="232"/>
    </location>
</feature>
<feature type="transmembrane region" description="Helical; Name=6" evidence="2">
    <location>
        <begin position="233"/>
        <end position="253"/>
    </location>
</feature>
<feature type="topological domain" description="Extracellular" evidence="2">
    <location>
        <begin position="254"/>
        <end position="261"/>
    </location>
</feature>
<feature type="transmembrane region" description="Helical; Name=7" evidence="2">
    <location>
        <begin position="262"/>
        <end position="282"/>
    </location>
</feature>
<feature type="topological domain" description="Cytoplasmic" evidence="2">
    <location>
        <begin position="283"/>
        <end position="303"/>
    </location>
</feature>
<feature type="glycosylation site" description="N-linked (GlcNAc...) asparagine" evidence="2">
    <location>
        <position position="166"/>
    </location>
</feature>